<evidence type="ECO:0000250" key="1">
    <source>
        <dbReference type="UniProtKB" id="A0A7U3TCA2"/>
    </source>
</evidence>
<evidence type="ECO:0000269" key="2">
    <source>
    </source>
</evidence>
<evidence type="ECO:0000303" key="3">
    <source>
    </source>
</evidence>
<evidence type="ECO:0000305" key="4"/>
<reference key="1">
    <citation type="journal article" date="2018" name="Genome Announc.">
        <title>Complete Genome Sequence of the Novel Virulent Phage PMBT28 with Lytic Activity against Thermotolerant Salmonella enterica subsp. enterica Serovar Senftenberg ATCC 43845.</title>
        <authorList>
            <person name="Koberg S."/>
            <person name="Brinks E."/>
            <person name="Albrecht V."/>
            <person name="Neve H."/>
            <person name="Franz C.M.A.P."/>
        </authorList>
    </citation>
    <scope>NUCLEOTIDE SEQUENCE [LARGE SCALE GENOMIC DNA]</scope>
</reference>
<reference key="2">
    <citation type="journal article" date="2021" name="Science">
        <title>A widespread pathway for substitution of adenine by diaminopurine in phage genomes.</title>
        <authorList>
            <person name="Zhou Y."/>
            <person name="Xu X."/>
            <person name="Wei Y."/>
            <person name="Cheng Y."/>
            <person name="Guo Y."/>
            <person name="Khudyakov I."/>
            <person name="Liu F."/>
            <person name="He P."/>
            <person name="Song Z."/>
            <person name="Li Z."/>
            <person name="Gao Y."/>
            <person name="Ang E.L."/>
            <person name="Zhao H."/>
            <person name="Zhang Y."/>
            <person name="Zhao S."/>
        </authorList>
    </citation>
    <scope>FUNCTION</scope>
    <scope>CATALYTIC ACTIVITY</scope>
    <scope>COFACTOR</scope>
</reference>
<gene>
    <name type="primary">datZ</name>
</gene>
<accession>A0A2L0V156</accession>
<sequence>MMTMTPRDLMRAQYVTRWQIVPTTRSQSVAQHSWAVAMLAMNLWCRRTGGQPGEAATDVELGKIAVMALWHDAPEVFTGDINTPTKIFLNASNALDELENTAGDGYLESMDGGPIRTCVKIADFLEAMYWLMEHGDGHYANNQLHGLNERFHQYLNEHAPLWRDSAVALWKELSDVNAETTTFQRVNYLKANDA</sequence>
<feature type="chain" id="PRO_0000453682" description="dATP triphosphohydrolase">
    <location>
        <begin position="1"/>
        <end position="194"/>
    </location>
</feature>
<feature type="binding site" evidence="1">
    <location>
        <position position="17"/>
    </location>
    <ligand>
        <name>dATP</name>
        <dbReference type="ChEBI" id="CHEBI:61404"/>
    </ligand>
</feature>
<feature type="binding site" evidence="1">
    <location>
        <position position="32"/>
    </location>
    <ligand>
        <name>Co(2+)</name>
        <dbReference type="ChEBI" id="CHEBI:48828"/>
        <label>1</label>
        <note>catalytic</note>
    </ligand>
</feature>
<feature type="binding site" evidence="1">
    <location>
        <position position="71"/>
    </location>
    <ligand>
        <name>Co(2+)</name>
        <dbReference type="ChEBI" id="CHEBI:48828"/>
        <label>1</label>
        <note>catalytic</note>
    </ligand>
</feature>
<feature type="binding site" evidence="1">
    <location>
        <position position="72"/>
    </location>
    <ligand>
        <name>Co(2+)</name>
        <dbReference type="ChEBI" id="CHEBI:48828"/>
        <label>1</label>
        <note>catalytic</note>
    </ligand>
</feature>
<feature type="binding site" evidence="1">
    <location>
        <position position="75"/>
    </location>
    <ligand>
        <name>Co(2+)</name>
        <dbReference type="ChEBI" id="CHEBI:48828"/>
        <label>2</label>
        <note>catalytic</note>
    </ligand>
</feature>
<feature type="binding site" evidence="1">
    <location>
        <position position="80"/>
    </location>
    <ligand>
        <name>Co(2+)</name>
        <dbReference type="ChEBI" id="CHEBI:48828"/>
        <label>2</label>
        <note>catalytic</note>
    </ligand>
</feature>
<feature type="binding site" evidence="1">
    <location>
        <position position="123"/>
    </location>
    <ligand>
        <name>Co(2+)</name>
        <dbReference type="ChEBI" id="CHEBI:48828"/>
        <label>1</label>
        <note>catalytic</note>
    </ligand>
</feature>
<organism>
    <name type="scientific">Salmonella phage PMBT28</name>
    <dbReference type="NCBI Taxonomy" id="2081904"/>
    <lineage>
        <taxon>Viruses</taxon>
        <taxon>Duplodnaviria</taxon>
        <taxon>Heunggongvirae</taxon>
        <taxon>Uroviricota</taxon>
        <taxon>Caudoviricetes</taxon>
    </lineage>
</organism>
<name>DATPH_BPPMB</name>
<proteinExistence type="evidence at protein level"/>
<dbReference type="EMBL" id="MG641885">
    <property type="protein sequence ID" value="AUZ95524.1"/>
    <property type="molecule type" value="Genomic_DNA"/>
</dbReference>
<dbReference type="SMR" id="A0A2L0V156"/>
<dbReference type="Proteomes" id="UP000241443">
    <property type="component" value="Genome"/>
</dbReference>
<dbReference type="GO" id="GO:0005524">
    <property type="term" value="F:ATP binding"/>
    <property type="evidence" value="ECO:0007669"/>
    <property type="project" value="UniProtKB-KW"/>
</dbReference>
<dbReference type="GO" id="GO:0016787">
    <property type="term" value="F:hydrolase activity"/>
    <property type="evidence" value="ECO:0000314"/>
    <property type="project" value="UniProtKB"/>
</dbReference>
<dbReference type="GO" id="GO:0046872">
    <property type="term" value="F:metal ion binding"/>
    <property type="evidence" value="ECO:0007669"/>
    <property type="project" value="UniProtKB-KW"/>
</dbReference>
<dbReference type="Gene3D" id="1.10.3210.10">
    <property type="entry name" value="Hypothetical protein af1432"/>
    <property type="match status" value="1"/>
</dbReference>
<dbReference type="Pfam" id="PF12917">
    <property type="entry name" value="YfbR-like"/>
    <property type="match status" value="1"/>
</dbReference>
<dbReference type="SUPFAM" id="SSF109604">
    <property type="entry name" value="HD-domain/PDEase-like"/>
    <property type="match status" value="1"/>
</dbReference>
<organismHost>
    <name type="scientific">Salmonella enterica</name>
    <name type="common">Salmonella choleraesuis</name>
    <dbReference type="NCBI Taxonomy" id="28901"/>
</organismHost>
<protein>
    <recommendedName>
        <fullName evidence="3">dATP triphosphohydrolase</fullName>
        <shortName evidence="3">dATPase</shortName>
    </recommendedName>
</protein>
<keyword id="KW-0067">ATP-binding</keyword>
<keyword id="KW-0170">Cobalt</keyword>
<keyword id="KW-0378">Hydrolase</keyword>
<keyword id="KW-0479">Metal-binding</keyword>
<keyword id="KW-0547">Nucleotide-binding</keyword>
<keyword id="KW-1185">Reference proteome</keyword>
<comment type="function">
    <text evidence="2">Catalyzes the hydrolysis of dATP, dADP and dAMP into dA (PubMed:33926954). This step is essential for Z-genome synthesis (containing aminoadenine instead of adenine). Specifically removes dATP and its precursor dADP from the nucleotide pool of the host, preventing the incorporation of A into the phage genome and favoring the integration of the Z-base into the viral genome (PubMed:33926954).</text>
</comment>
<comment type="catalytic activity">
    <reaction evidence="2">
        <text>dATP + H2O = 2'-deoxyadenosine + triphosphate + H(+)</text>
        <dbReference type="Rhea" id="RHEA:67648"/>
        <dbReference type="ChEBI" id="CHEBI:15377"/>
        <dbReference type="ChEBI" id="CHEBI:15378"/>
        <dbReference type="ChEBI" id="CHEBI:17256"/>
        <dbReference type="ChEBI" id="CHEBI:18036"/>
        <dbReference type="ChEBI" id="CHEBI:61404"/>
    </reaction>
</comment>
<comment type="catalytic activity">
    <reaction evidence="2">
        <text>dADP + H2O = 2'-deoxyadenosine + diphosphate</text>
        <dbReference type="Rhea" id="RHEA:67652"/>
        <dbReference type="ChEBI" id="CHEBI:15377"/>
        <dbReference type="ChEBI" id="CHEBI:17256"/>
        <dbReference type="ChEBI" id="CHEBI:33019"/>
        <dbReference type="ChEBI" id="CHEBI:57667"/>
    </reaction>
</comment>
<comment type="catalytic activity">
    <reaction evidence="2">
        <text>dAMP + H2O = 2'-deoxyadenosine + phosphate</text>
        <dbReference type="Rhea" id="RHEA:29371"/>
        <dbReference type="ChEBI" id="CHEBI:15377"/>
        <dbReference type="ChEBI" id="CHEBI:17256"/>
        <dbReference type="ChEBI" id="CHEBI:43474"/>
        <dbReference type="ChEBI" id="CHEBI:58245"/>
    </reaction>
</comment>
<comment type="cofactor">
    <cofactor evidence="2">
        <name>Co(2+)</name>
        <dbReference type="ChEBI" id="CHEBI:48828"/>
    </cofactor>
    <text evidence="1">Uses a typical 2 metal-ion mechanism to dephosphorylate dATP.</text>
</comment>
<comment type="similarity">
    <text evidence="4">Belongs to the Caudovirales dATP triphosphohydrolase family.</text>
</comment>